<evidence type="ECO:0000250" key="1">
    <source>
        <dbReference type="UniProtKB" id="B1H1X1"/>
    </source>
</evidence>
<evidence type="ECO:0000250" key="2">
    <source>
        <dbReference type="UniProtKB" id="Q9UF56"/>
    </source>
</evidence>
<evidence type="ECO:0000255" key="3">
    <source>
        <dbReference type="PROSITE-ProRule" id="PRU00080"/>
    </source>
</evidence>
<evidence type="ECO:0000256" key="4">
    <source>
        <dbReference type="SAM" id="MobiDB-lite"/>
    </source>
</evidence>
<evidence type="ECO:0000269" key="5">
    <source>
    </source>
</evidence>
<evidence type="ECO:0000269" key="6">
    <source>
    </source>
</evidence>
<evidence type="ECO:0000303" key="7">
    <source>
    </source>
</evidence>
<evidence type="ECO:0000303" key="8">
    <source>
    </source>
</evidence>
<evidence type="ECO:0000303" key="9">
    <source>
    </source>
</evidence>
<evidence type="ECO:0000305" key="10"/>
<evidence type="ECO:0000312" key="11">
    <source>
        <dbReference type="MGI" id="MGI:1354704"/>
    </source>
</evidence>
<proteinExistence type="evidence at protein level"/>
<keyword id="KW-0025">Alternative splicing</keyword>
<keyword id="KW-0963">Cytoplasm</keyword>
<keyword id="KW-0539">Nucleus</keyword>
<keyword id="KW-1185">Reference proteome</keyword>
<keyword id="KW-0833">Ubl conjugation pathway</keyword>
<protein>
    <recommendedName>
        <fullName evidence="9">F-box/LRR-repeat protein 17</fullName>
    </recommendedName>
    <alternativeName>
        <fullName evidence="10">F-box and leucine-rich repeat protein 17</fullName>
    </alternativeName>
    <alternativeName>
        <fullName evidence="7">F-box only protein 13</fullName>
    </alternativeName>
</protein>
<comment type="function">
    <text evidence="1 2 5 6">Substrate-recognition component of the SCF(FBXL17) E3 ubiquitin ligase complex, a key component of a quality control pathway required to ensure functional dimerization of BTB domain-containing proteins (dimerization quality control, DQC). FBXL17 specifically recognizes and binds a conserved degron of non-consecutive residues present at the interface of BTB dimers of aberrant composition: aberrant BTB dimer are then ubiquitinated by the SCF(FBXL17) complex and degraded by the proteasome (By similarity). The ability of the SCF(FBXL17) complex to eliminate compromised BTB dimers is required for the differentiation and survival of neural crest and neuronal cells (By similarity). The SCF(FBXL17) complex mediates ubiquitination and degradation of BACH1 (By similarity). The SCF(FBXL17) complex is also involved in the regulation of the hedgehog/smoothened (Hh) signaling pathway by mediating the ubiquitination and degradation of SUFU, allowing the release of GLI1 from SUFU for proper Hh signal transduction (PubMed:27234298). The SCF(FBXL17) complex mediates ubiquitination and degradation of PRMT1 (PubMed:28883095).</text>
</comment>
<comment type="subunit">
    <text evidence="2 6">Part of the SCF (SKP1-CUL1-F-box) E3 ubiquitin-protein ligase complex SCF(FBXL17) composed of CUL1, SKP1, RBX1 and FBXL17. Interacts with BTB domain-containing proteins such as KLHL12, BCL6 and BACH1; specifically recognizes and binds a conserved degron of non-consecutive residues present at the interface of BTB dimers of aberrant composition. Interacts with SUFU (By similarity). Interacts with PRMT1 (PubMed:28883095).</text>
</comment>
<comment type="subcellular location">
    <subcellularLocation>
        <location evidence="2">Cytoplasm</location>
    </subcellularLocation>
    <subcellularLocation>
        <location evidence="2">Nucleus</location>
    </subcellularLocation>
    <text evidence="2">Present in the cytoplasm and nucleus; more abundant in the cytoplasm.</text>
</comment>
<comment type="alternative products">
    <event type="alternative splicing"/>
    <isoform>
        <id>Q9QZN1-1</id>
        <name>1</name>
        <sequence type="displayed"/>
    </isoform>
    <isoform>
        <id>Q9QZN1-2</id>
        <name>2</name>
        <sequence type="described" ref="VSP_009477 VSP_009478"/>
    </isoform>
</comment>
<comment type="similarity">
    <text evidence="10">Belongs to the FBXL17 family.</text>
</comment>
<accession>Q9QZN1</accession>
<accession>B2RRC1</accession>
<accession>Q8BTC3</accession>
<feature type="chain" id="PRO_0000119866" description="F-box/LRR-repeat protein 17">
    <location>
        <begin position="1"/>
        <end position="701"/>
    </location>
</feature>
<feature type="domain" description="F-box" evidence="3">
    <location>
        <begin position="318"/>
        <end position="365"/>
    </location>
</feature>
<feature type="region of interest" description="Disordered" evidence="4">
    <location>
        <begin position="73"/>
        <end position="93"/>
    </location>
</feature>
<feature type="region of interest" description="Disordered" evidence="4">
    <location>
        <begin position="227"/>
        <end position="250"/>
    </location>
</feature>
<feature type="region of interest" description="Disordered" evidence="4">
    <location>
        <begin position="279"/>
        <end position="321"/>
    </location>
</feature>
<feature type="compositionally biased region" description="Pro residues" evidence="4">
    <location>
        <begin position="81"/>
        <end position="90"/>
    </location>
</feature>
<feature type="compositionally biased region" description="Gly residues" evidence="4">
    <location>
        <begin position="227"/>
        <end position="236"/>
    </location>
</feature>
<feature type="compositionally biased region" description="Polar residues" evidence="4">
    <location>
        <begin position="285"/>
        <end position="294"/>
    </location>
</feature>
<feature type="splice variant" id="VSP_009477" description="In isoform 2." evidence="8">
    <location>
        <begin position="1"/>
        <end position="474"/>
    </location>
</feature>
<feature type="splice variant" id="VSP_009478" description="In isoform 2." evidence="8">
    <original>YKISDEGMIVIAKSCLKLQRIYMQENKL</original>
    <variation>MDPFGFVLLDKEGMKYEKTQTKKPGKAK</variation>
    <location>
        <begin position="475"/>
        <end position="502"/>
    </location>
</feature>
<gene>
    <name evidence="9 11" type="primary">Fbxl17</name>
    <name type="synonym">Fbl17</name>
    <name evidence="7" type="synonym">Fbx13</name>
    <name type="synonym">Fbxo13</name>
</gene>
<organism>
    <name type="scientific">Mus musculus</name>
    <name type="common">Mouse</name>
    <dbReference type="NCBI Taxonomy" id="10090"/>
    <lineage>
        <taxon>Eukaryota</taxon>
        <taxon>Metazoa</taxon>
        <taxon>Chordata</taxon>
        <taxon>Craniata</taxon>
        <taxon>Vertebrata</taxon>
        <taxon>Euteleostomi</taxon>
        <taxon>Mammalia</taxon>
        <taxon>Eutheria</taxon>
        <taxon>Euarchontoglires</taxon>
        <taxon>Glires</taxon>
        <taxon>Rodentia</taxon>
        <taxon>Myomorpha</taxon>
        <taxon>Muroidea</taxon>
        <taxon>Muridae</taxon>
        <taxon>Murinae</taxon>
        <taxon>Mus</taxon>
        <taxon>Mus</taxon>
    </lineage>
</organism>
<dbReference type="EMBL" id="CH466537">
    <property type="protein sequence ID" value="EDL38277.1"/>
    <property type="molecule type" value="Genomic_DNA"/>
</dbReference>
<dbReference type="EMBL" id="BC058120">
    <property type="protein sequence ID" value="AAH58120.1"/>
    <property type="molecule type" value="mRNA"/>
</dbReference>
<dbReference type="EMBL" id="BC138330">
    <property type="protein sequence ID" value="AAI38331.1"/>
    <property type="molecule type" value="mRNA"/>
</dbReference>
<dbReference type="EMBL" id="BC138331">
    <property type="protein sequence ID" value="AAI38332.1"/>
    <property type="molecule type" value="mRNA"/>
</dbReference>
<dbReference type="EMBL" id="AF176529">
    <property type="protein sequence ID" value="AAF09138.1"/>
    <property type="molecule type" value="mRNA"/>
</dbReference>
<dbReference type="EMBL" id="AK004419">
    <property type="protein sequence ID" value="BAC25082.1"/>
    <property type="molecule type" value="mRNA"/>
</dbReference>
<dbReference type="CCDS" id="CCDS50162.1">
    <molecule id="Q9QZN1-1"/>
</dbReference>
<dbReference type="RefSeq" id="NP_056609.1">
    <molecule id="Q9QZN1-1"/>
    <property type="nucleotide sequence ID" value="NM_015794.1"/>
</dbReference>
<dbReference type="SMR" id="Q9QZN1"/>
<dbReference type="BioGRID" id="206092">
    <property type="interactions" value="1"/>
</dbReference>
<dbReference type="FunCoup" id="Q9QZN1">
    <property type="interactions" value="1622"/>
</dbReference>
<dbReference type="STRING" id="10090.ENSMUSP00000024761"/>
<dbReference type="iPTMnet" id="Q9QZN1"/>
<dbReference type="PhosphoSitePlus" id="Q9QZN1"/>
<dbReference type="SwissPalm" id="Q9QZN1"/>
<dbReference type="jPOST" id="Q9QZN1"/>
<dbReference type="PaxDb" id="10090-ENSMUSP00000024761"/>
<dbReference type="PeptideAtlas" id="Q9QZN1"/>
<dbReference type="ProteomicsDB" id="271817">
    <molecule id="Q9QZN1-1"/>
</dbReference>
<dbReference type="ProteomicsDB" id="271818">
    <molecule id="Q9QZN1-2"/>
</dbReference>
<dbReference type="Pumba" id="Q9QZN1"/>
<dbReference type="Antibodypedia" id="25280">
    <property type="antibodies" value="121 antibodies from 17 providers"/>
</dbReference>
<dbReference type="DNASU" id="50758"/>
<dbReference type="Ensembl" id="ENSMUST00000024761.13">
    <molecule id="Q9QZN1-1"/>
    <property type="protein sequence ID" value="ENSMUSP00000024761.7"/>
    <property type="gene ID" value="ENSMUSG00000023965.14"/>
</dbReference>
<dbReference type="GeneID" id="50758"/>
<dbReference type="KEGG" id="mmu:50758"/>
<dbReference type="UCSC" id="uc008dfj.2">
    <molecule id="Q9QZN1-2"/>
    <property type="organism name" value="mouse"/>
</dbReference>
<dbReference type="UCSC" id="uc008dfl.2">
    <molecule id="Q9QZN1-1"/>
    <property type="organism name" value="mouse"/>
</dbReference>
<dbReference type="AGR" id="MGI:1354704"/>
<dbReference type="CTD" id="64839"/>
<dbReference type="MGI" id="MGI:1354704">
    <property type="gene designation" value="Fbxl17"/>
</dbReference>
<dbReference type="VEuPathDB" id="HostDB:ENSMUSG00000023965"/>
<dbReference type="eggNOG" id="KOG1947">
    <property type="taxonomic scope" value="Eukaryota"/>
</dbReference>
<dbReference type="GeneTree" id="ENSGT00940000156973"/>
<dbReference type="HOGENOM" id="CLU_024577_3_0_1"/>
<dbReference type="InParanoid" id="Q9QZN1"/>
<dbReference type="OMA" id="MGWIPSM"/>
<dbReference type="OrthoDB" id="550575at2759"/>
<dbReference type="PhylomeDB" id="Q9QZN1"/>
<dbReference type="TreeFam" id="TF332421"/>
<dbReference type="Reactome" id="R-MMU-9708530">
    <property type="pathway name" value="Regulation of BACH1 activity"/>
</dbReference>
<dbReference type="BioGRID-ORCS" id="50758">
    <property type="hits" value="2 hits in 78 CRISPR screens"/>
</dbReference>
<dbReference type="ChiTaRS" id="Fbxl17">
    <property type="organism name" value="mouse"/>
</dbReference>
<dbReference type="PRO" id="PR:Q9QZN1"/>
<dbReference type="Proteomes" id="UP000000589">
    <property type="component" value="Chromosome 17"/>
</dbReference>
<dbReference type="RNAct" id="Q9QZN1">
    <property type="molecule type" value="protein"/>
</dbReference>
<dbReference type="Bgee" id="ENSMUSG00000023965">
    <property type="expression patterns" value="Expressed in cumulus cell and 232 other cell types or tissues"/>
</dbReference>
<dbReference type="ExpressionAtlas" id="Q9QZN1">
    <property type="expression patterns" value="baseline and differential"/>
</dbReference>
<dbReference type="GO" id="GO:0005737">
    <property type="term" value="C:cytoplasm"/>
    <property type="evidence" value="ECO:0000250"/>
    <property type="project" value="UniProtKB"/>
</dbReference>
<dbReference type="GO" id="GO:0005654">
    <property type="term" value="C:nucleoplasm"/>
    <property type="evidence" value="ECO:0007669"/>
    <property type="project" value="Ensembl"/>
</dbReference>
<dbReference type="GO" id="GO:0005634">
    <property type="term" value="C:nucleus"/>
    <property type="evidence" value="ECO:0000250"/>
    <property type="project" value="UniProtKB"/>
</dbReference>
<dbReference type="GO" id="GO:0019005">
    <property type="term" value="C:SCF ubiquitin ligase complex"/>
    <property type="evidence" value="ECO:0000250"/>
    <property type="project" value="UniProtKB"/>
</dbReference>
<dbReference type="GO" id="GO:0007399">
    <property type="term" value="P:nervous system development"/>
    <property type="evidence" value="ECO:0000250"/>
    <property type="project" value="UniProtKB"/>
</dbReference>
<dbReference type="GO" id="GO:0014033">
    <property type="term" value="P:neural crest cell differentiation"/>
    <property type="evidence" value="ECO:0000250"/>
    <property type="project" value="UniProtKB"/>
</dbReference>
<dbReference type="GO" id="GO:0043161">
    <property type="term" value="P:proteasome-mediated ubiquitin-dependent protein catabolic process"/>
    <property type="evidence" value="ECO:0000250"/>
    <property type="project" value="UniProtKB"/>
</dbReference>
<dbReference type="GO" id="GO:0000209">
    <property type="term" value="P:protein polyubiquitination"/>
    <property type="evidence" value="ECO:0000250"/>
    <property type="project" value="UniProtKB"/>
</dbReference>
<dbReference type="GO" id="GO:0006515">
    <property type="term" value="P:protein quality control for misfolded or incompletely synthesized proteins"/>
    <property type="evidence" value="ECO:0000250"/>
    <property type="project" value="UniProtKB"/>
</dbReference>
<dbReference type="GO" id="GO:0016567">
    <property type="term" value="P:protein ubiquitination"/>
    <property type="evidence" value="ECO:0000250"/>
    <property type="project" value="UniProtKB"/>
</dbReference>
<dbReference type="GO" id="GO:0008589">
    <property type="term" value="P:regulation of smoothened signaling pathway"/>
    <property type="evidence" value="ECO:0000250"/>
    <property type="project" value="UniProtKB"/>
</dbReference>
<dbReference type="GO" id="GO:0031146">
    <property type="term" value="P:SCF-dependent proteasomal ubiquitin-dependent protein catabolic process"/>
    <property type="evidence" value="ECO:0000250"/>
    <property type="project" value="UniProtKB"/>
</dbReference>
<dbReference type="CDD" id="cd22092">
    <property type="entry name" value="F-box_FBXO13"/>
    <property type="match status" value="1"/>
</dbReference>
<dbReference type="FunFam" id="3.80.10.10:FF:000161">
    <property type="entry name" value="F-box/LRR-repeat protein 17 isoform X1"/>
    <property type="match status" value="1"/>
</dbReference>
<dbReference type="FunFam" id="3.80.10.10:FF:000358">
    <property type="entry name" value="F-box/LRR-repeat protein 17 isoform X1"/>
    <property type="match status" value="1"/>
</dbReference>
<dbReference type="FunFam" id="1.20.1280.50:FF:000038">
    <property type="entry name" value="F-box/LRR-repeat protein 17 isoform X3"/>
    <property type="match status" value="1"/>
</dbReference>
<dbReference type="Gene3D" id="3.80.10.10">
    <property type="entry name" value="Ribonuclease Inhibitor"/>
    <property type="match status" value="2"/>
</dbReference>
<dbReference type="InterPro" id="IPR036047">
    <property type="entry name" value="F-box-like_dom_sf"/>
</dbReference>
<dbReference type="InterPro" id="IPR001810">
    <property type="entry name" value="F-box_dom"/>
</dbReference>
<dbReference type="InterPro" id="IPR050648">
    <property type="entry name" value="F-box_LRR-repeat"/>
</dbReference>
<dbReference type="InterPro" id="IPR001611">
    <property type="entry name" value="Leu-rich_rpt"/>
</dbReference>
<dbReference type="InterPro" id="IPR006553">
    <property type="entry name" value="Leu-rich_rpt_Cys-con_subtyp"/>
</dbReference>
<dbReference type="InterPro" id="IPR032675">
    <property type="entry name" value="LRR_dom_sf"/>
</dbReference>
<dbReference type="PANTHER" id="PTHR13382:SF72">
    <property type="entry name" value="F-BOX AND LEUCINE-RICH REPEAT PROTEIN 17"/>
    <property type="match status" value="1"/>
</dbReference>
<dbReference type="PANTHER" id="PTHR13382">
    <property type="entry name" value="MITOCHONDRIAL ATP SYNTHASE COUPLING FACTOR B"/>
    <property type="match status" value="1"/>
</dbReference>
<dbReference type="Pfam" id="PF12937">
    <property type="entry name" value="F-box-like"/>
    <property type="match status" value="1"/>
</dbReference>
<dbReference type="Pfam" id="PF13516">
    <property type="entry name" value="LRR_6"/>
    <property type="match status" value="1"/>
</dbReference>
<dbReference type="SMART" id="SM00256">
    <property type="entry name" value="FBOX"/>
    <property type="match status" value="1"/>
</dbReference>
<dbReference type="SMART" id="SM00367">
    <property type="entry name" value="LRR_CC"/>
    <property type="match status" value="11"/>
</dbReference>
<dbReference type="SUPFAM" id="SSF81383">
    <property type="entry name" value="F-box domain"/>
    <property type="match status" value="1"/>
</dbReference>
<dbReference type="SUPFAM" id="SSF52047">
    <property type="entry name" value="RNI-like"/>
    <property type="match status" value="1"/>
</dbReference>
<dbReference type="PROSITE" id="PS50181">
    <property type="entry name" value="FBOX"/>
    <property type="match status" value="1"/>
</dbReference>
<sequence length="701" mass="75683">MGHLLSKEPRNRPSQKRPRCCSWCRRRRPLLRLPRRALAKASPQPAAPRSRDCFFRGPCMLCFIVHSPGAPASAGLEEEPPLSPPPPPPRDGAYAAVSSQHLARRYAALAAEDCAAAARRFLLSSAAAAAAAASSPASCCKELGLAAAAAWEQQGRSLFLAGVGPVRFLGPLAAVQLFRAPPAPPPQAEPATALEMVCKRKGAGVPACTPCKQPRCGCGGCGGGGGGGGGPAGGGASPPRPPDAGCCQAPEQPPPPLCPAPASPASECAPIVAAAGDTVRAGGTAPSSAQQQPESGDADCQEPPENPCDCHREPPPEIPDINQLPPSILLKIFSNLSLNERCLSASLVCKYWRDLCLDFQFWKQLDLSSRQQVTDELLEKIASRSQNIIEINISDCRSLSDSGVCVLAFKCPGLLRYTAYRCKQLSDTSIIAVASHCPLLQKVHVGNQDKLTDEGLKQLGSRCRELKDIHFGQCYKISDEGMIVIAKSCLKLQRIYMQENKLVTDQSVKAFAEHCPELQYVGFMGCSVTSKGVIHLTKLRNLSSLDLRHITELDNETVMEIVKRCKNLSSLNLCLNWIINDRCVEVIAKEGQNLKELYLVSCKITDYALIAIGRYSVTIETVDVGWCKEITDQGATLIAQSSKSLRYLGLMRCDKVNELTVEQLVQQYPHITFSTVLQDCKRTLERAYQMGWTPNMSAATS</sequence>
<reference key="1">
    <citation type="submission" date="2005-07" db="EMBL/GenBank/DDBJ databases">
        <authorList>
            <person name="Mural R.J."/>
            <person name="Adams M.D."/>
            <person name="Myers E.W."/>
            <person name="Smith H.O."/>
            <person name="Venter J.C."/>
        </authorList>
    </citation>
    <scope>NUCLEOTIDE SEQUENCE [LARGE SCALE GENOMIC DNA]</scope>
</reference>
<reference key="2">
    <citation type="journal article" date="2004" name="Genome Res.">
        <title>The status, quality, and expansion of the NIH full-length cDNA project: the Mammalian Gene Collection (MGC).</title>
        <authorList>
            <consortium name="The MGC Project Team"/>
        </authorList>
    </citation>
    <scope>NUCLEOTIDE SEQUENCE [LARGE SCALE MRNA] (ISOFORM 2)</scope>
    <source>
        <strain>C57BL/6J</strain>
        <tissue>Brain</tissue>
    </source>
</reference>
<reference key="3">
    <citation type="journal article" date="1999" name="Curr. Biol.">
        <title>A family of mammalian F-box proteins.</title>
        <authorList>
            <person name="Winston J.T."/>
            <person name="Koepp D.M."/>
            <person name="Zhu C."/>
            <person name="Elledge S.J."/>
            <person name="Harper J.W."/>
        </authorList>
    </citation>
    <scope>NUCLEOTIDE SEQUENCE [MRNA] OF 240-674 (ISOFORM 1)</scope>
</reference>
<reference key="4">
    <citation type="journal article" date="2005" name="Science">
        <title>The transcriptional landscape of the mammalian genome.</title>
        <authorList>
            <person name="Carninci P."/>
            <person name="Kasukawa T."/>
            <person name="Katayama S."/>
            <person name="Gough J."/>
            <person name="Frith M.C."/>
            <person name="Maeda N."/>
            <person name="Oyama R."/>
            <person name="Ravasi T."/>
            <person name="Lenhard B."/>
            <person name="Wells C."/>
            <person name="Kodzius R."/>
            <person name="Shimokawa K."/>
            <person name="Bajic V.B."/>
            <person name="Brenner S.E."/>
            <person name="Batalov S."/>
            <person name="Forrest A.R."/>
            <person name="Zavolan M."/>
            <person name="Davis M.J."/>
            <person name="Wilming L.G."/>
            <person name="Aidinis V."/>
            <person name="Allen J.E."/>
            <person name="Ambesi-Impiombato A."/>
            <person name="Apweiler R."/>
            <person name="Aturaliya R.N."/>
            <person name="Bailey T.L."/>
            <person name="Bansal M."/>
            <person name="Baxter L."/>
            <person name="Beisel K.W."/>
            <person name="Bersano T."/>
            <person name="Bono H."/>
            <person name="Chalk A.M."/>
            <person name="Chiu K.P."/>
            <person name="Choudhary V."/>
            <person name="Christoffels A."/>
            <person name="Clutterbuck D.R."/>
            <person name="Crowe M.L."/>
            <person name="Dalla E."/>
            <person name="Dalrymple B.P."/>
            <person name="de Bono B."/>
            <person name="Della Gatta G."/>
            <person name="di Bernardo D."/>
            <person name="Down T."/>
            <person name="Engstrom P."/>
            <person name="Fagiolini M."/>
            <person name="Faulkner G."/>
            <person name="Fletcher C.F."/>
            <person name="Fukushima T."/>
            <person name="Furuno M."/>
            <person name="Futaki S."/>
            <person name="Gariboldi M."/>
            <person name="Georgii-Hemming P."/>
            <person name="Gingeras T.R."/>
            <person name="Gojobori T."/>
            <person name="Green R.E."/>
            <person name="Gustincich S."/>
            <person name="Harbers M."/>
            <person name="Hayashi Y."/>
            <person name="Hensch T.K."/>
            <person name="Hirokawa N."/>
            <person name="Hill D."/>
            <person name="Huminiecki L."/>
            <person name="Iacono M."/>
            <person name="Ikeo K."/>
            <person name="Iwama A."/>
            <person name="Ishikawa T."/>
            <person name="Jakt M."/>
            <person name="Kanapin A."/>
            <person name="Katoh M."/>
            <person name="Kawasawa Y."/>
            <person name="Kelso J."/>
            <person name="Kitamura H."/>
            <person name="Kitano H."/>
            <person name="Kollias G."/>
            <person name="Krishnan S.P."/>
            <person name="Kruger A."/>
            <person name="Kummerfeld S.K."/>
            <person name="Kurochkin I.V."/>
            <person name="Lareau L.F."/>
            <person name="Lazarevic D."/>
            <person name="Lipovich L."/>
            <person name="Liu J."/>
            <person name="Liuni S."/>
            <person name="McWilliam S."/>
            <person name="Madan Babu M."/>
            <person name="Madera M."/>
            <person name="Marchionni L."/>
            <person name="Matsuda H."/>
            <person name="Matsuzawa S."/>
            <person name="Miki H."/>
            <person name="Mignone F."/>
            <person name="Miyake S."/>
            <person name="Morris K."/>
            <person name="Mottagui-Tabar S."/>
            <person name="Mulder N."/>
            <person name="Nakano N."/>
            <person name="Nakauchi H."/>
            <person name="Ng P."/>
            <person name="Nilsson R."/>
            <person name="Nishiguchi S."/>
            <person name="Nishikawa S."/>
            <person name="Nori F."/>
            <person name="Ohara O."/>
            <person name="Okazaki Y."/>
            <person name="Orlando V."/>
            <person name="Pang K.C."/>
            <person name="Pavan W.J."/>
            <person name="Pavesi G."/>
            <person name="Pesole G."/>
            <person name="Petrovsky N."/>
            <person name="Piazza S."/>
            <person name="Reed J."/>
            <person name="Reid J.F."/>
            <person name="Ring B.Z."/>
            <person name="Ringwald M."/>
            <person name="Rost B."/>
            <person name="Ruan Y."/>
            <person name="Salzberg S.L."/>
            <person name="Sandelin A."/>
            <person name="Schneider C."/>
            <person name="Schoenbach C."/>
            <person name="Sekiguchi K."/>
            <person name="Semple C.A."/>
            <person name="Seno S."/>
            <person name="Sessa L."/>
            <person name="Sheng Y."/>
            <person name="Shibata Y."/>
            <person name="Shimada H."/>
            <person name="Shimada K."/>
            <person name="Silva D."/>
            <person name="Sinclair B."/>
            <person name="Sperling S."/>
            <person name="Stupka E."/>
            <person name="Sugiura K."/>
            <person name="Sultana R."/>
            <person name="Takenaka Y."/>
            <person name="Taki K."/>
            <person name="Tammoja K."/>
            <person name="Tan S.L."/>
            <person name="Tang S."/>
            <person name="Taylor M.S."/>
            <person name="Tegner J."/>
            <person name="Teichmann S.A."/>
            <person name="Ueda H.R."/>
            <person name="van Nimwegen E."/>
            <person name="Verardo R."/>
            <person name="Wei C.L."/>
            <person name="Yagi K."/>
            <person name="Yamanishi H."/>
            <person name="Zabarovsky E."/>
            <person name="Zhu S."/>
            <person name="Zimmer A."/>
            <person name="Hide W."/>
            <person name="Bult C."/>
            <person name="Grimmond S.M."/>
            <person name="Teasdale R.D."/>
            <person name="Liu E.T."/>
            <person name="Brusic V."/>
            <person name="Quackenbush J."/>
            <person name="Wahlestedt C."/>
            <person name="Mattick J.S."/>
            <person name="Hume D.A."/>
            <person name="Kai C."/>
            <person name="Sasaki D."/>
            <person name="Tomaru Y."/>
            <person name="Fukuda S."/>
            <person name="Kanamori-Katayama M."/>
            <person name="Suzuki M."/>
            <person name="Aoki J."/>
            <person name="Arakawa T."/>
            <person name="Iida J."/>
            <person name="Imamura K."/>
            <person name="Itoh M."/>
            <person name="Kato T."/>
            <person name="Kawaji H."/>
            <person name="Kawagashira N."/>
            <person name="Kawashima T."/>
            <person name="Kojima M."/>
            <person name="Kondo S."/>
            <person name="Konno H."/>
            <person name="Nakano K."/>
            <person name="Ninomiya N."/>
            <person name="Nishio T."/>
            <person name="Okada M."/>
            <person name="Plessy C."/>
            <person name="Shibata K."/>
            <person name="Shiraki T."/>
            <person name="Suzuki S."/>
            <person name="Tagami M."/>
            <person name="Waki K."/>
            <person name="Watahiki A."/>
            <person name="Okamura-Oho Y."/>
            <person name="Suzuki H."/>
            <person name="Kawai J."/>
            <person name="Hayashizaki Y."/>
        </authorList>
    </citation>
    <scope>NUCLEOTIDE SEQUENCE [LARGE SCALE MRNA] OF 568-701 (ISOFORMS 1/2)</scope>
    <source>
        <strain>C57BL/6J</strain>
    </source>
</reference>
<reference key="5">
    <citation type="journal article" date="2016" name="EMBO J.">
        <title>SCF (Fbxl17) ubiquitylation of Sufu regulates Hedgehog signaling and medulloblastoma development.</title>
        <authorList>
            <person name="Raducu M."/>
            <person name="Fung E."/>
            <person name="Serres S."/>
            <person name="Infante P."/>
            <person name="Barberis A."/>
            <person name="Fischer R."/>
            <person name="Bristow C."/>
            <person name="Thezenas M.L."/>
            <person name="Finta C."/>
            <person name="Christianson J.C."/>
            <person name="Buffa F.M."/>
            <person name="Kessler B.M."/>
            <person name="Sibson N.R."/>
            <person name="Di Marcotullio L."/>
            <person name="Toftgaard R."/>
            <person name="D'Angiolella V."/>
        </authorList>
    </citation>
    <scope>FUNCTION</scope>
</reference>
<reference key="6">
    <citation type="journal article" date="2017" name="J. Cell Sci.">
        <title>Lipopolysaccharide modulates p300 and Sirt1 to promote PRMT1 stability via an SCFFbxl17-recognized acetyldegron.</title>
        <authorList>
            <person name="Lai Y."/>
            <person name="Li J."/>
            <person name="Li X."/>
            <person name="Zou C."/>
        </authorList>
    </citation>
    <scope>FUNCTION</scope>
    <scope>INTERACTION WITH PRMT1</scope>
</reference>
<name>FXL17_MOUSE</name>